<accession>Q8EWN6</accession>
<protein>
    <recommendedName>
        <fullName evidence="1">tRNA uridine 5-carboxymethylaminomethyl modification enzyme MnmG</fullName>
    </recommendedName>
    <alternativeName>
        <fullName evidence="1">Glucose-inhibited division protein A</fullName>
    </alternativeName>
</protein>
<comment type="function">
    <text evidence="1">NAD-binding protein involved in the addition of a carboxymethylaminomethyl (cmnm) group at the wobble position (U34) of certain tRNAs, forming tRNA-cmnm(5)s(2)U34.</text>
</comment>
<comment type="cofactor">
    <cofactor evidence="1">
        <name>FAD</name>
        <dbReference type="ChEBI" id="CHEBI:57692"/>
    </cofactor>
</comment>
<comment type="subunit">
    <text evidence="1">Homodimer. Heterotetramer of two MnmE and two MnmG subunits.</text>
</comment>
<comment type="subcellular location">
    <subcellularLocation>
        <location evidence="1">Cytoplasm</location>
    </subcellularLocation>
</comment>
<comment type="similarity">
    <text evidence="1">Belongs to the MnmG family.</text>
</comment>
<reference key="1">
    <citation type="journal article" date="2002" name="Nucleic Acids Res.">
        <title>The complete genomic sequence of Mycoplasma penetrans, an intracellular bacterial pathogen in humans.</title>
        <authorList>
            <person name="Sasaki Y."/>
            <person name="Ishikawa J."/>
            <person name="Yamashita A."/>
            <person name="Oshima K."/>
            <person name="Kenri T."/>
            <person name="Furuya K."/>
            <person name="Yoshino C."/>
            <person name="Horino A."/>
            <person name="Shiba T."/>
            <person name="Sasaki T."/>
            <person name="Hattori M."/>
        </authorList>
    </citation>
    <scope>NUCLEOTIDE SEQUENCE [LARGE SCALE GENOMIC DNA]</scope>
    <source>
        <strain>HF-2</strain>
    </source>
</reference>
<evidence type="ECO:0000255" key="1">
    <source>
        <dbReference type="HAMAP-Rule" id="MF_00129"/>
    </source>
</evidence>
<feature type="chain" id="PRO_0000117136" description="tRNA uridine 5-carboxymethylaminomethyl modification enzyme MnmG">
    <location>
        <begin position="1"/>
        <end position="616"/>
    </location>
</feature>
<feature type="binding site" evidence="1">
    <location>
        <begin position="10"/>
        <end position="15"/>
    </location>
    <ligand>
        <name>FAD</name>
        <dbReference type="ChEBI" id="CHEBI:57692"/>
    </ligand>
</feature>
<feature type="binding site" evidence="1">
    <location>
        <position position="122"/>
    </location>
    <ligand>
        <name>FAD</name>
        <dbReference type="ChEBI" id="CHEBI:57692"/>
    </ligand>
</feature>
<feature type="binding site" evidence="1">
    <location>
        <position position="177"/>
    </location>
    <ligand>
        <name>FAD</name>
        <dbReference type="ChEBI" id="CHEBI:57692"/>
    </ligand>
</feature>
<feature type="binding site" evidence="1">
    <location>
        <begin position="271"/>
        <end position="285"/>
    </location>
    <ligand>
        <name>NAD(+)</name>
        <dbReference type="ChEBI" id="CHEBI:57540"/>
    </ligand>
</feature>
<feature type="binding site" evidence="1">
    <location>
        <position position="368"/>
    </location>
    <ligand>
        <name>FAD</name>
        <dbReference type="ChEBI" id="CHEBI:57692"/>
    </ligand>
</feature>
<dbReference type="EMBL" id="BA000026">
    <property type="protein sequence ID" value="BAC43958.1"/>
    <property type="molecule type" value="Genomic_DNA"/>
</dbReference>
<dbReference type="RefSeq" id="WP_011076994.1">
    <property type="nucleotide sequence ID" value="NC_004432.1"/>
</dbReference>
<dbReference type="SMR" id="Q8EWN6"/>
<dbReference type="FunCoup" id="Q8EWN6">
    <property type="interactions" value="257"/>
</dbReference>
<dbReference type="STRING" id="272633.gene:10731266"/>
<dbReference type="KEGG" id="mpe:MYPE1670"/>
<dbReference type="eggNOG" id="COG0445">
    <property type="taxonomic scope" value="Bacteria"/>
</dbReference>
<dbReference type="HOGENOM" id="CLU_007831_2_2_14"/>
<dbReference type="InParanoid" id="Q8EWN6"/>
<dbReference type="Proteomes" id="UP000002522">
    <property type="component" value="Chromosome"/>
</dbReference>
<dbReference type="GO" id="GO:0005829">
    <property type="term" value="C:cytosol"/>
    <property type="evidence" value="ECO:0007669"/>
    <property type="project" value="TreeGrafter"/>
</dbReference>
<dbReference type="GO" id="GO:0050660">
    <property type="term" value="F:flavin adenine dinucleotide binding"/>
    <property type="evidence" value="ECO:0007669"/>
    <property type="project" value="UniProtKB-UniRule"/>
</dbReference>
<dbReference type="GO" id="GO:0030488">
    <property type="term" value="P:tRNA methylation"/>
    <property type="evidence" value="ECO:0007669"/>
    <property type="project" value="TreeGrafter"/>
</dbReference>
<dbReference type="GO" id="GO:0002098">
    <property type="term" value="P:tRNA wobble uridine modification"/>
    <property type="evidence" value="ECO:0007669"/>
    <property type="project" value="InterPro"/>
</dbReference>
<dbReference type="FunFam" id="3.50.50.60:FF:000002">
    <property type="entry name" value="tRNA uridine 5-carboxymethylaminomethyl modification enzyme MnmG"/>
    <property type="match status" value="1"/>
</dbReference>
<dbReference type="Gene3D" id="3.50.50.60">
    <property type="entry name" value="FAD/NAD(P)-binding domain"/>
    <property type="match status" value="2"/>
</dbReference>
<dbReference type="Gene3D" id="1.10.150.570">
    <property type="entry name" value="GidA associated domain, C-terminal subdomain"/>
    <property type="match status" value="1"/>
</dbReference>
<dbReference type="Gene3D" id="1.10.10.1800">
    <property type="entry name" value="tRNA uridine 5-carboxymethylaminomethyl modification enzyme MnmG/GidA"/>
    <property type="match status" value="1"/>
</dbReference>
<dbReference type="HAMAP" id="MF_00129">
    <property type="entry name" value="MnmG_GidA"/>
    <property type="match status" value="1"/>
</dbReference>
<dbReference type="InterPro" id="IPR036188">
    <property type="entry name" value="FAD/NAD-bd_sf"/>
</dbReference>
<dbReference type="InterPro" id="IPR049312">
    <property type="entry name" value="GIDA_C_N"/>
</dbReference>
<dbReference type="InterPro" id="IPR004416">
    <property type="entry name" value="MnmG"/>
</dbReference>
<dbReference type="InterPro" id="IPR002218">
    <property type="entry name" value="MnmG-rel"/>
</dbReference>
<dbReference type="InterPro" id="IPR020595">
    <property type="entry name" value="MnmG-rel_CS"/>
</dbReference>
<dbReference type="InterPro" id="IPR026904">
    <property type="entry name" value="MnmG_C"/>
</dbReference>
<dbReference type="InterPro" id="IPR047001">
    <property type="entry name" value="MnmG_C_subdom"/>
</dbReference>
<dbReference type="InterPro" id="IPR044920">
    <property type="entry name" value="MnmG_C_subdom_sf"/>
</dbReference>
<dbReference type="InterPro" id="IPR040131">
    <property type="entry name" value="MnmG_N"/>
</dbReference>
<dbReference type="NCBIfam" id="TIGR00136">
    <property type="entry name" value="mnmG_gidA"/>
    <property type="match status" value="1"/>
</dbReference>
<dbReference type="PANTHER" id="PTHR11806">
    <property type="entry name" value="GLUCOSE INHIBITED DIVISION PROTEIN A"/>
    <property type="match status" value="1"/>
</dbReference>
<dbReference type="PANTHER" id="PTHR11806:SF0">
    <property type="entry name" value="PROTEIN MTO1 HOMOLOG, MITOCHONDRIAL"/>
    <property type="match status" value="1"/>
</dbReference>
<dbReference type="Pfam" id="PF01134">
    <property type="entry name" value="GIDA"/>
    <property type="match status" value="1"/>
</dbReference>
<dbReference type="Pfam" id="PF21680">
    <property type="entry name" value="GIDA_C_1st"/>
    <property type="match status" value="1"/>
</dbReference>
<dbReference type="Pfam" id="PF13932">
    <property type="entry name" value="SAM_GIDA_C"/>
    <property type="match status" value="1"/>
</dbReference>
<dbReference type="SMART" id="SM01228">
    <property type="entry name" value="GIDA_assoc_3"/>
    <property type="match status" value="1"/>
</dbReference>
<dbReference type="SUPFAM" id="SSF51905">
    <property type="entry name" value="FAD/NAD(P)-binding domain"/>
    <property type="match status" value="1"/>
</dbReference>
<dbReference type="PROSITE" id="PS01280">
    <property type="entry name" value="GIDA_1"/>
    <property type="match status" value="1"/>
</dbReference>
<dbReference type="PROSITE" id="PS01281">
    <property type="entry name" value="GIDA_2"/>
    <property type="match status" value="1"/>
</dbReference>
<gene>
    <name evidence="1" type="primary">mnmG</name>
    <name evidence="1" type="synonym">gidA</name>
    <name type="ordered locus">MYPE1670</name>
</gene>
<proteinExistence type="inferred from homology"/>
<organism>
    <name type="scientific">Malacoplasma penetrans (strain HF-2)</name>
    <name type="common">Mycoplasma penetrans</name>
    <dbReference type="NCBI Taxonomy" id="272633"/>
    <lineage>
        <taxon>Bacteria</taxon>
        <taxon>Bacillati</taxon>
        <taxon>Mycoplasmatota</taxon>
        <taxon>Mycoplasmoidales</taxon>
        <taxon>Mycoplasmoidaceae</taxon>
        <taxon>Malacoplasma</taxon>
    </lineage>
</organism>
<keyword id="KW-0963">Cytoplasm</keyword>
<keyword id="KW-0274">FAD</keyword>
<keyword id="KW-0285">Flavoprotein</keyword>
<keyword id="KW-0520">NAD</keyword>
<keyword id="KW-1185">Reference proteome</keyword>
<keyword id="KW-0819">tRNA processing</keyword>
<sequence length="616" mass="70400">MKKYDCLVIGAGHAGLEAAFILAKKKYKVALFVLDKKLVGNMPCNPSIGGPAKGIVTREIDALGGMQAIAADNTQLQMKLLNSSKGAGTWALRAQIDKLEYSKWFLNRIEENEYIDLIDKEVNSIKFVNQKVCGVYTVDNQFFESNYLIVTTGTFLDSSIHIGHKVIKKGPDDFNGSYLLAKQIKELDFQTIRLKTGTPPRILKNSIDYSKLQIEPGTNKKYSFSHFDRKFLDFNKQEVCYLAFTNNKIHEIINNNLDKSAMYSGFITGTGPRYCPSIEDKVVRFNDKERHQLFVEPESKHLDTIYLGGLSSSLPEDVQEQIVKNIVGFENAVIKKYAYAIEYDAINPIQLYPTLETKKIKGLFFAGQINGTSGYEEAACQGLMAGINVLCQLENREPLVLKRNEAYIGVLIEDLINKEITDPYRLLTSRAEYRLELRNDNADQRLLKYGYELGLISQSHWDEYNKNLENFNNTLKELETSTLKNVKEFKYNSRKTNTTLYEILKRPDYSFIDMEPFLKNKNTLDEYWKDKVDIYIKYGGYIKSQQKIINDTKNIDNIKLSSISDYKDVPNISLEARDKLNKVKPLTLGQASRVSGINLVDLINIKLYLENKKKQT</sequence>
<name>MNMG_MALP2</name>